<proteinExistence type="inferred from homology"/>
<reference key="1">
    <citation type="journal article" date="2005" name="Nature">
        <title>Genomic sequence of the pathogenic and allergenic filamentous fungus Aspergillus fumigatus.</title>
        <authorList>
            <person name="Nierman W.C."/>
            <person name="Pain A."/>
            <person name="Anderson M.J."/>
            <person name="Wortman J.R."/>
            <person name="Kim H.S."/>
            <person name="Arroyo J."/>
            <person name="Berriman M."/>
            <person name="Abe K."/>
            <person name="Archer D.B."/>
            <person name="Bermejo C."/>
            <person name="Bennett J.W."/>
            <person name="Bowyer P."/>
            <person name="Chen D."/>
            <person name="Collins M."/>
            <person name="Coulsen R."/>
            <person name="Davies R."/>
            <person name="Dyer P.S."/>
            <person name="Farman M.L."/>
            <person name="Fedorova N."/>
            <person name="Fedorova N.D."/>
            <person name="Feldblyum T.V."/>
            <person name="Fischer R."/>
            <person name="Fosker N."/>
            <person name="Fraser A."/>
            <person name="Garcia J.L."/>
            <person name="Garcia M.J."/>
            <person name="Goble A."/>
            <person name="Goldman G.H."/>
            <person name="Gomi K."/>
            <person name="Griffith-Jones S."/>
            <person name="Gwilliam R."/>
            <person name="Haas B.J."/>
            <person name="Haas H."/>
            <person name="Harris D.E."/>
            <person name="Horiuchi H."/>
            <person name="Huang J."/>
            <person name="Humphray S."/>
            <person name="Jimenez J."/>
            <person name="Keller N."/>
            <person name="Khouri H."/>
            <person name="Kitamoto K."/>
            <person name="Kobayashi T."/>
            <person name="Konzack S."/>
            <person name="Kulkarni R."/>
            <person name="Kumagai T."/>
            <person name="Lafton A."/>
            <person name="Latge J.-P."/>
            <person name="Li W."/>
            <person name="Lord A."/>
            <person name="Lu C."/>
            <person name="Majoros W.H."/>
            <person name="May G.S."/>
            <person name="Miller B.L."/>
            <person name="Mohamoud Y."/>
            <person name="Molina M."/>
            <person name="Monod M."/>
            <person name="Mouyna I."/>
            <person name="Mulligan S."/>
            <person name="Murphy L.D."/>
            <person name="O'Neil S."/>
            <person name="Paulsen I."/>
            <person name="Penalva M.A."/>
            <person name="Pertea M."/>
            <person name="Price C."/>
            <person name="Pritchard B.L."/>
            <person name="Quail M.A."/>
            <person name="Rabbinowitsch E."/>
            <person name="Rawlins N."/>
            <person name="Rajandream M.A."/>
            <person name="Reichard U."/>
            <person name="Renauld H."/>
            <person name="Robson G.D."/>
            <person name="Rodriguez de Cordoba S."/>
            <person name="Rodriguez-Pena J.M."/>
            <person name="Ronning C.M."/>
            <person name="Rutter S."/>
            <person name="Salzberg S.L."/>
            <person name="Sanchez M."/>
            <person name="Sanchez-Ferrero J.C."/>
            <person name="Saunders D."/>
            <person name="Seeger K."/>
            <person name="Squares R."/>
            <person name="Squares S."/>
            <person name="Takeuchi M."/>
            <person name="Tekaia F."/>
            <person name="Turner G."/>
            <person name="Vazquez de Aldana C.R."/>
            <person name="Weidman J."/>
            <person name="White O."/>
            <person name="Woodward J.R."/>
            <person name="Yu J.-H."/>
            <person name="Fraser C.M."/>
            <person name="Galagan J.E."/>
            <person name="Asai K."/>
            <person name="Machida M."/>
            <person name="Hall N."/>
            <person name="Barrell B.G."/>
            <person name="Denning D.W."/>
        </authorList>
    </citation>
    <scope>NUCLEOTIDE SEQUENCE [LARGE SCALE GENOMIC DNA]</scope>
    <source>
        <strain>ATCC MYA-4609 / CBS 101355 / FGSC A1100 / Af293</strain>
    </source>
</reference>
<comment type="function">
    <text evidence="1">RNA-binding component of the eukaryotic translation initiation factor 3 (eIF-3) complex, which is involved in protein synthesis of a specialized repertoire of mRNAs and, together with other initiation factors, stimulates binding of mRNA and methionyl-tRNAi to the 40S ribosome. The eIF-3 complex specifically targets and initiates translation of a subset of mRNAs involved in cell proliferation.</text>
</comment>
<comment type="subunit">
    <text evidence="1">Component of the eukaryotic translation initiation factor 3 (eIF-3) complex.</text>
</comment>
<comment type="subcellular location">
    <subcellularLocation>
        <location evidence="1">Cytoplasm</location>
    </subcellularLocation>
</comment>
<comment type="similarity">
    <text evidence="1">Belongs to the eIF-3 subunit A family.</text>
</comment>
<evidence type="ECO:0000255" key="1">
    <source>
        <dbReference type="HAMAP-Rule" id="MF_03000"/>
    </source>
</evidence>
<evidence type="ECO:0000255" key="2">
    <source>
        <dbReference type="PROSITE-ProRule" id="PRU01185"/>
    </source>
</evidence>
<evidence type="ECO:0000256" key="3">
    <source>
        <dbReference type="SAM" id="MobiDB-lite"/>
    </source>
</evidence>
<dbReference type="EMBL" id="AAHF01000007">
    <property type="protein sequence ID" value="EAL88231.2"/>
    <property type="molecule type" value="Genomic_DNA"/>
</dbReference>
<dbReference type="RefSeq" id="XP_750269.2">
    <property type="nucleotide sequence ID" value="XM_745176.2"/>
</dbReference>
<dbReference type="SMR" id="Q4WJQ1"/>
<dbReference type="FunCoup" id="Q4WJQ1">
    <property type="interactions" value="1278"/>
</dbReference>
<dbReference type="STRING" id="330879.Q4WJQ1"/>
<dbReference type="EnsemblFungi" id="EAL88231">
    <property type="protein sequence ID" value="EAL88231"/>
    <property type="gene ID" value="AFUA_1G05200"/>
</dbReference>
<dbReference type="GeneID" id="3507506"/>
<dbReference type="KEGG" id="afm:AFUA_1G05200"/>
<dbReference type="VEuPathDB" id="FungiDB:Afu1g05200"/>
<dbReference type="eggNOG" id="KOG2072">
    <property type="taxonomic scope" value="Eukaryota"/>
</dbReference>
<dbReference type="HOGENOM" id="CLU_002096_2_1_1"/>
<dbReference type="InParanoid" id="Q4WJQ1"/>
<dbReference type="OMA" id="EHITNKR"/>
<dbReference type="OrthoDB" id="18884at2759"/>
<dbReference type="Proteomes" id="UP000002530">
    <property type="component" value="Chromosome 1"/>
</dbReference>
<dbReference type="GO" id="GO:0010494">
    <property type="term" value="C:cytoplasmic stress granule"/>
    <property type="evidence" value="ECO:0007669"/>
    <property type="project" value="EnsemblFungi"/>
</dbReference>
<dbReference type="GO" id="GO:0016282">
    <property type="term" value="C:eukaryotic 43S preinitiation complex"/>
    <property type="evidence" value="ECO:0007669"/>
    <property type="project" value="UniProtKB-UniRule"/>
</dbReference>
<dbReference type="GO" id="GO:0033290">
    <property type="term" value="C:eukaryotic 48S preinitiation complex"/>
    <property type="evidence" value="ECO:0007669"/>
    <property type="project" value="UniProtKB-UniRule"/>
</dbReference>
<dbReference type="GO" id="GO:0071540">
    <property type="term" value="C:eukaryotic translation initiation factor 3 complex, eIF3e"/>
    <property type="evidence" value="ECO:0000318"/>
    <property type="project" value="GO_Central"/>
</dbReference>
<dbReference type="GO" id="GO:0071541">
    <property type="term" value="C:eukaryotic translation initiation factor 3 complex, eIF3m"/>
    <property type="evidence" value="ECO:0000318"/>
    <property type="project" value="GO_Central"/>
</dbReference>
<dbReference type="GO" id="GO:0043614">
    <property type="term" value="C:multi-eIF complex"/>
    <property type="evidence" value="ECO:0000318"/>
    <property type="project" value="GO_Central"/>
</dbReference>
<dbReference type="GO" id="GO:0003729">
    <property type="term" value="F:mRNA binding"/>
    <property type="evidence" value="ECO:0000318"/>
    <property type="project" value="GO_Central"/>
</dbReference>
<dbReference type="GO" id="GO:0003743">
    <property type="term" value="F:translation initiation factor activity"/>
    <property type="evidence" value="ECO:0007669"/>
    <property type="project" value="UniProtKB-UniRule"/>
</dbReference>
<dbReference type="GO" id="GO:0001732">
    <property type="term" value="P:formation of cytoplasmic translation initiation complex"/>
    <property type="evidence" value="ECO:0000318"/>
    <property type="project" value="GO_Central"/>
</dbReference>
<dbReference type="GO" id="GO:0002188">
    <property type="term" value="P:translation reinitiation"/>
    <property type="evidence" value="ECO:0000318"/>
    <property type="project" value="GO_Central"/>
</dbReference>
<dbReference type="FunFam" id="1.25.40.860:FF:000003">
    <property type="entry name" value="Eukaryotic translation initiation factor 3 subunit A"/>
    <property type="match status" value="1"/>
</dbReference>
<dbReference type="FunFam" id="1.25.40.860:FF:000005">
    <property type="entry name" value="Eukaryotic translation initiation factor 3 subunit A"/>
    <property type="match status" value="1"/>
</dbReference>
<dbReference type="FunFam" id="4.10.860.10:FF:000001">
    <property type="entry name" value="Eukaryotic translation initiation factor 3 subunit A"/>
    <property type="match status" value="1"/>
</dbReference>
<dbReference type="Gene3D" id="1.25.40.860">
    <property type="match status" value="2"/>
</dbReference>
<dbReference type="Gene3D" id="4.10.860.10">
    <property type="entry name" value="UVR domain"/>
    <property type="match status" value="1"/>
</dbReference>
<dbReference type="HAMAP" id="MF_03000">
    <property type="entry name" value="eIF3a"/>
    <property type="match status" value="1"/>
</dbReference>
<dbReference type="InterPro" id="IPR027512">
    <property type="entry name" value="EIF3A"/>
</dbReference>
<dbReference type="InterPro" id="IPR054711">
    <property type="entry name" value="eIF3a_PCI_TPR-like"/>
</dbReference>
<dbReference type="InterPro" id="IPR000717">
    <property type="entry name" value="PCI_dom"/>
</dbReference>
<dbReference type="PANTHER" id="PTHR14005:SF0">
    <property type="entry name" value="EUKARYOTIC TRANSLATION INITIATION FACTOR 3 SUBUNIT A"/>
    <property type="match status" value="1"/>
</dbReference>
<dbReference type="PANTHER" id="PTHR14005">
    <property type="entry name" value="EUKARYOTIC TRANSLATION INITIATION FACTOR 3, THETA SUBUNIT"/>
    <property type="match status" value="1"/>
</dbReference>
<dbReference type="Pfam" id="PF22591">
    <property type="entry name" value="eIF3a_PCI_TPR-like"/>
    <property type="match status" value="1"/>
</dbReference>
<dbReference type="Pfam" id="PF01399">
    <property type="entry name" value="PCI"/>
    <property type="match status" value="1"/>
</dbReference>
<dbReference type="SMART" id="SM00088">
    <property type="entry name" value="PINT"/>
    <property type="match status" value="1"/>
</dbReference>
<dbReference type="PROSITE" id="PS50250">
    <property type="entry name" value="PCI"/>
    <property type="match status" value="1"/>
</dbReference>
<protein>
    <recommendedName>
        <fullName evidence="1">Eukaryotic translation initiation factor 3 subunit A</fullName>
        <shortName evidence="1">eIF3a</shortName>
    </recommendedName>
    <alternativeName>
        <fullName evidence="1">Eukaryotic translation initiation factor 3 110 kDa subunit homolog</fullName>
        <shortName evidence="1">eIF3 p110</shortName>
    </alternativeName>
    <alternativeName>
        <fullName evidence="1">Translation initiation factor eIF3, p110 subunit homolog</fullName>
    </alternativeName>
</protein>
<feature type="chain" id="PRO_0000366351" description="Eukaryotic translation initiation factor 3 subunit A">
    <location>
        <begin position="1"/>
        <end position="1051"/>
    </location>
</feature>
<feature type="domain" description="PCI" evidence="2">
    <location>
        <begin position="339"/>
        <end position="523"/>
    </location>
</feature>
<feature type="region of interest" description="Disordered" evidence="3">
    <location>
        <begin position="617"/>
        <end position="664"/>
    </location>
</feature>
<feature type="region of interest" description="Disordered" evidence="3">
    <location>
        <begin position="794"/>
        <end position="1051"/>
    </location>
</feature>
<feature type="coiled-coil region" evidence="1">
    <location>
        <begin position="92"/>
        <end position="121"/>
    </location>
</feature>
<feature type="coiled-coil region" evidence="1">
    <location>
        <begin position="608"/>
        <end position="905"/>
    </location>
</feature>
<feature type="compositionally biased region" description="Basic and acidic residues" evidence="3">
    <location>
        <begin position="617"/>
        <end position="632"/>
    </location>
</feature>
<feature type="compositionally biased region" description="Basic and acidic residues" evidence="3">
    <location>
        <begin position="642"/>
        <end position="664"/>
    </location>
</feature>
<feature type="compositionally biased region" description="Basic and acidic residues" evidence="3">
    <location>
        <begin position="794"/>
        <end position="901"/>
    </location>
</feature>
<feature type="compositionally biased region" description="Basic and acidic residues" evidence="3">
    <location>
        <begin position="916"/>
        <end position="926"/>
    </location>
</feature>
<feature type="compositionally biased region" description="Low complexity" evidence="3">
    <location>
        <begin position="948"/>
        <end position="961"/>
    </location>
</feature>
<feature type="compositionally biased region" description="Low complexity" evidence="3">
    <location>
        <begin position="1010"/>
        <end position="1039"/>
    </location>
</feature>
<gene>
    <name type="primary">tif32</name>
    <name type="ORF">AFUA_1G05200</name>
</gene>
<name>EIF3A_ASPFU</name>
<accession>Q4WJQ1</accession>
<sequence length="1051" mass="120229">MPPPPHIKPENVLKRAQELIAVGQAPAALNVLHEHVTSKRTRSSPIASLEPVMLLFVELCVDLRKGKAAKDGLYQYKNIAQNTNVGTIEVVLKKFIELAEKKVTEAQAKADEIQSSLESAAPSSNVEDLEAIETPETILLATVSGEQSRDRTDRAVVTPWLKFLWETYRTVLEILKNNARLEVMYQTTALQAFQFCLKYTRKTEFRRLCELLRNHVQNAAKYSAQMHAINLSDPDTLQRHLDTRFQQLNVAVELELWQEAFRSIEDIHTLLSLSKRPAKNVMMANYYEKLARIFLVSENYLFHAAAWNRYYNLLRQSAAALAAGQGTKKENPSVTEADMTKAASFVLLSALSIPVISTSRSRGALVDVDEARKNKNARLTNLLGMAQPPSRAVLFRDALNKGLLKRARPEIRDLYNILEVDFHPLSICKKITPILKQIGADPEMEKYVLPLQQVILTRLFQQLSQVYESVELKFVYELAQFPDPFQITPAMIEKFIMNGCKKGDLAIRVDHTAGVLTFDTDIFSSAKALHSGSAAGSAESEVGSVQRLQNTPAEIARLQLTRLAKTLHVTCMYVDPSYNEARIQAKKAAQARAEAGAAKEHEETLARRVLIEKKKEAATDALQRKQREEETRKRIRNQQLQEAEKQRLLDEQREREKKRLRDEQERIRQQELKKQLEELKSGVKGIDISEIDLEDLDANRLRAIKLAQLEKEKNELNERIRTTAKRIDHLERAFRREELKHIPEDYEAQKKRDMELYEAIKAETLKEAEEKHKEAVALKHRLSRLVPVFSSFRKEVSEKRHEEFEKRRKAAEREFEAKKKQRIKEVQERRRRERAEREAEERRRKEEEERAKREEEERIAKEEERRRILAEEKAKREEERKRLDEIAQRQKQREEEAEARRAARKSGLAEPPTRAAELERPVERTAPRLNLVSRTGSGPSWRERQAAKEAAGAAPAPAAAEAPKEEVQLPRRTGGYVPPHLRSGANASPATPPSNGPAPEKYVPRHMRESSSSQPPSRTQTPPAAAPASSDKPEASPAPQKWVPRWKQQQQ</sequence>
<organism>
    <name type="scientific">Aspergillus fumigatus (strain ATCC MYA-4609 / CBS 101355 / FGSC A1100 / Af293)</name>
    <name type="common">Neosartorya fumigata</name>
    <dbReference type="NCBI Taxonomy" id="330879"/>
    <lineage>
        <taxon>Eukaryota</taxon>
        <taxon>Fungi</taxon>
        <taxon>Dikarya</taxon>
        <taxon>Ascomycota</taxon>
        <taxon>Pezizomycotina</taxon>
        <taxon>Eurotiomycetes</taxon>
        <taxon>Eurotiomycetidae</taxon>
        <taxon>Eurotiales</taxon>
        <taxon>Aspergillaceae</taxon>
        <taxon>Aspergillus</taxon>
        <taxon>Aspergillus subgen. Fumigati</taxon>
    </lineage>
</organism>
<keyword id="KW-0175">Coiled coil</keyword>
<keyword id="KW-0963">Cytoplasm</keyword>
<keyword id="KW-0396">Initiation factor</keyword>
<keyword id="KW-0648">Protein biosynthesis</keyword>
<keyword id="KW-1185">Reference proteome</keyword>
<keyword id="KW-0694">RNA-binding</keyword>